<protein>
    <recommendedName>
        <fullName evidence="1">1-(5-phosphoribosyl)-5-[(5-phosphoribosylamino)methylideneamino] imidazole-4-carboxamide isomerase</fullName>
        <ecNumber evidence="1">5.3.1.16</ecNumber>
    </recommendedName>
    <alternativeName>
        <fullName evidence="1">Phosphoribosylformimino-5-aminoimidazole carboxamide ribotide isomerase</fullName>
    </alternativeName>
</protein>
<sequence>MIIPALDLIEGQVVRLYQGDYGQVTEYKVDPAEQFNLYHQAGANWLHLVDLTGAKDTTARQLDLIAKLLASTPANIQIGGGVRTEQDVIDLLEAGAQRVVVGSTAVKQPELVKGWMEKYGAEKIVLALDINIYQDGTRKVAISGWQEDSGVTIEALINDYLTVGLQHVLCTDISRDGTLEGSNVELYVDLCKQYPQVQFQSSGGIGSLADIEALKGSGVAGVIVGRALLDGKFTAEEAFACWQSE</sequence>
<comment type="catalytic activity">
    <reaction evidence="1">
        <text>1-(5-phospho-beta-D-ribosyl)-5-[(5-phospho-beta-D-ribosylamino)methylideneamino]imidazole-4-carboxamide = 5-[(5-phospho-1-deoxy-D-ribulos-1-ylimino)methylamino]-1-(5-phospho-beta-D-ribosyl)imidazole-4-carboxamide</text>
        <dbReference type="Rhea" id="RHEA:15469"/>
        <dbReference type="ChEBI" id="CHEBI:58435"/>
        <dbReference type="ChEBI" id="CHEBI:58525"/>
        <dbReference type="EC" id="5.3.1.16"/>
    </reaction>
</comment>
<comment type="pathway">
    <text evidence="1">Amino-acid biosynthesis; L-histidine biosynthesis; L-histidine from 5-phospho-alpha-D-ribose 1-diphosphate: step 4/9.</text>
</comment>
<comment type="subcellular location">
    <subcellularLocation>
        <location evidence="1">Cytoplasm</location>
    </subcellularLocation>
</comment>
<comment type="similarity">
    <text evidence="1">Belongs to the HisA/HisF family.</text>
</comment>
<feature type="chain" id="PRO_1000063242" description="1-(5-phosphoribosyl)-5-[(5-phosphoribosylamino)methylideneamino] imidazole-4-carboxamide isomerase">
    <location>
        <begin position="1"/>
        <end position="245"/>
    </location>
</feature>
<feature type="active site" description="Proton acceptor" evidence="1">
    <location>
        <position position="7"/>
    </location>
</feature>
<feature type="active site" description="Proton donor" evidence="1">
    <location>
        <position position="129"/>
    </location>
</feature>
<reference key="1">
    <citation type="submission" date="2007-08" db="EMBL/GenBank/DDBJ databases">
        <authorList>
            <consortium name="The Vibrio harveyi Genome Sequencing Project"/>
            <person name="Bassler B."/>
            <person name="Clifton S.W."/>
            <person name="Fulton L."/>
            <person name="Delehaunty K."/>
            <person name="Fronick C."/>
            <person name="Harrison M."/>
            <person name="Markivic C."/>
            <person name="Fulton R."/>
            <person name="Tin-Wollam A.-M."/>
            <person name="Shah N."/>
            <person name="Pepin K."/>
            <person name="Nash W."/>
            <person name="Thiruvilangam P."/>
            <person name="Bhonagiri V."/>
            <person name="Waters C."/>
            <person name="Tu K.C."/>
            <person name="Irgon J."/>
            <person name="Wilson R.K."/>
        </authorList>
    </citation>
    <scope>NUCLEOTIDE SEQUENCE [LARGE SCALE GENOMIC DNA]</scope>
    <source>
        <strain>ATCC BAA-1116 / BB120</strain>
    </source>
</reference>
<dbReference type="EC" id="5.3.1.16" evidence="1"/>
<dbReference type="EMBL" id="CP000789">
    <property type="protein sequence ID" value="ABU70804.1"/>
    <property type="molecule type" value="Genomic_DNA"/>
</dbReference>
<dbReference type="RefSeq" id="WP_012127629.1">
    <property type="nucleotide sequence ID" value="NC_009783.1"/>
</dbReference>
<dbReference type="SMR" id="A7MX07"/>
<dbReference type="KEGG" id="vha:VIBHAR_01835"/>
<dbReference type="PATRIC" id="fig|338187.25.peg.841"/>
<dbReference type="UniPathway" id="UPA00031">
    <property type="reaction ID" value="UER00009"/>
</dbReference>
<dbReference type="Proteomes" id="UP000008152">
    <property type="component" value="Chromosome I"/>
</dbReference>
<dbReference type="GO" id="GO:0005737">
    <property type="term" value="C:cytoplasm"/>
    <property type="evidence" value="ECO:0007669"/>
    <property type="project" value="UniProtKB-SubCell"/>
</dbReference>
<dbReference type="GO" id="GO:0003949">
    <property type="term" value="F:1-(5-phosphoribosyl)-5-[(5-phosphoribosylamino)methylideneamino]imidazole-4-carboxamide isomerase activity"/>
    <property type="evidence" value="ECO:0007669"/>
    <property type="project" value="UniProtKB-UniRule"/>
</dbReference>
<dbReference type="GO" id="GO:0000105">
    <property type="term" value="P:L-histidine biosynthetic process"/>
    <property type="evidence" value="ECO:0007669"/>
    <property type="project" value="UniProtKB-UniRule"/>
</dbReference>
<dbReference type="GO" id="GO:0000162">
    <property type="term" value="P:L-tryptophan biosynthetic process"/>
    <property type="evidence" value="ECO:0007669"/>
    <property type="project" value="TreeGrafter"/>
</dbReference>
<dbReference type="CDD" id="cd04732">
    <property type="entry name" value="HisA"/>
    <property type="match status" value="1"/>
</dbReference>
<dbReference type="FunFam" id="3.20.20.70:FF:000009">
    <property type="entry name" value="1-(5-phosphoribosyl)-5-[(5-phosphoribosylamino)methylideneamino] imidazole-4-carboxamide isomerase"/>
    <property type="match status" value="1"/>
</dbReference>
<dbReference type="Gene3D" id="3.20.20.70">
    <property type="entry name" value="Aldolase class I"/>
    <property type="match status" value="1"/>
</dbReference>
<dbReference type="HAMAP" id="MF_01014">
    <property type="entry name" value="HisA"/>
    <property type="match status" value="1"/>
</dbReference>
<dbReference type="InterPro" id="IPR013785">
    <property type="entry name" value="Aldolase_TIM"/>
</dbReference>
<dbReference type="InterPro" id="IPR006062">
    <property type="entry name" value="His_biosynth"/>
</dbReference>
<dbReference type="InterPro" id="IPR006063">
    <property type="entry name" value="HisA_bact_arch"/>
</dbReference>
<dbReference type="InterPro" id="IPR044524">
    <property type="entry name" value="Isoase_HisA-like"/>
</dbReference>
<dbReference type="InterPro" id="IPR023016">
    <property type="entry name" value="Isoase_HisA-like_bact"/>
</dbReference>
<dbReference type="InterPro" id="IPR011060">
    <property type="entry name" value="RibuloseP-bd_barrel"/>
</dbReference>
<dbReference type="NCBIfam" id="TIGR00007">
    <property type="entry name" value="1-(5-phosphoribosyl)-5-[(5-phosphoribosylamino)methylideneamino]imidazole-4-carboxamide isomerase"/>
    <property type="match status" value="1"/>
</dbReference>
<dbReference type="PANTHER" id="PTHR43090">
    <property type="entry name" value="1-(5-PHOSPHORIBOSYL)-5-[(5-PHOSPHORIBOSYLAMINO)METHYLIDENEAMINO] IMIDAZOLE-4-CARBOXAMIDE ISOMERASE"/>
    <property type="match status" value="1"/>
</dbReference>
<dbReference type="PANTHER" id="PTHR43090:SF2">
    <property type="entry name" value="1-(5-PHOSPHORIBOSYL)-5-[(5-PHOSPHORIBOSYLAMINO)METHYLIDENEAMINO] IMIDAZOLE-4-CARBOXAMIDE ISOMERASE"/>
    <property type="match status" value="1"/>
</dbReference>
<dbReference type="Pfam" id="PF00977">
    <property type="entry name" value="His_biosynth"/>
    <property type="match status" value="1"/>
</dbReference>
<dbReference type="SUPFAM" id="SSF51366">
    <property type="entry name" value="Ribulose-phoshate binding barrel"/>
    <property type="match status" value="1"/>
</dbReference>
<organism>
    <name type="scientific">Vibrio campbellii (strain ATCC BAA-1116)</name>
    <dbReference type="NCBI Taxonomy" id="2902295"/>
    <lineage>
        <taxon>Bacteria</taxon>
        <taxon>Pseudomonadati</taxon>
        <taxon>Pseudomonadota</taxon>
        <taxon>Gammaproteobacteria</taxon>
        <taxon>Vibrionales</taxon>
        <taxon>Vibrionaceae</taxon>
        <taxon>Vibrio</taxon>
    </lineage>
</organism>
<gene>
    <name evidence="1" type="primary">hisA</name>
    <name type="ordered locus">VIBHAR_01835</name>
</gene>
<keyword id="KW-0028">Amino-acid biosynthesis</keyword>
<keyword id="KW-0963">Cytoplasm</keyword>
<keyword id="KW-0368">Histidine biosynthesis</keyword>
<keyword id="KW-0413">Isomerase</keyword>
<name>HIS4_VIBC1</name>
<evidence type="ECO:0000255" key="1">
    <source>
        <dbReference type="HAMAP-Rule" id="MF_01014"/>
    </source>
</evidence>
<proteinExistence type="inferred from homology"/>
<accession>A7MX07</accession>